<gene>
    <name evidence="3" type="ordered locus">AtMg01250</name>
</gene>
<gene>
    <name evidence="2" type="ordered locus">At2g07697</name>
</gene>
<protein>
    <recommendedName>
        <fullName>Uncharacterized mitochondrial protein AtMg01250</fullName>
    </recommendedName>
    <alternativeName>
        <fullName>ORF102</fullName>
    </alternativeName>
</protein>
<comment type="subcellular location">
    <subcellularLocation>
        <location evidence="1">Mitochondrion</location>
    </subcellularLocation>
</comment>
<comment type="miscellaneous">
    <text>A stretch of 270 kb of the mitochondrial genome is duplicated within the centromere of chromosome 2 resulting in the duplication of the gene. The expression of the duplicated gene (At2g07697) is not demonstrated.</text>
</comment>
<proteinExistence type="predicted"/>
<name>M1250_ARATH</name>
<accession>P92555</accession>
<accession>Q1ZXW2</accession>
<geneLocation type="mitochondrion"/>
<feature type="chain" id="PRO_0000196821" description="Uncharacterized mitochondrial protein AtMg01250">
    <location>
        <begin position="1"/>
        <end position="122"/>
    </location>
</feature>
<feature type="sequence conflict" description="In Ref. 3; AC007730 and 4; CP002685." evidence="1" ref="3 4">
    <original>A</original>
    <variation>V</variation>
    <location>
        <position position="77"/>
    </location>
</feature>
<organism>
    <name type="scientific">Arabidopsis thaliana</name>
    <name type="common">Mouse-ear cress</name>
    <dbReference type="NCBI Taxonomy" id="3702"/>
    <lineage>
        <taxon>Eukaryota</taxon>
        <taxon>Viridiplantae</taxon>
        <taxon>Streptophyta</taxon>
        <taxon>Embryophyta</taxon>
        <taxon>Tracheophyta</taxon>
        <taxon>Spermatophyta</taxon>
        <taxon>Magnoliopsida</taxon>
        <taxon>eudicotyledons</taxon>
        <taxon>Gunneridae</taxon>
        <taxon>Pentapetalae</taxon>
        <taxon>rosids</taxon>
        <taxon>malvids</taxon>
        <taxon>Brassicales</taxon>
        <taxon>Brassicaceae</taxon>
        <taxon>Camelineae</taxon>
        <taxon>Arabidopsis</taxon>
    </lineage>
</organism>
<keyword id="KW-0496">Mitochondrion</keyword>
<keyword id="KW-1185">Reference proteome</keyword>
<sequence>MGYGVCHFYLLFIINGAPQGLVTPSRGLRQGDPLSPYLFILCTEVLSGLCRRAQEQGRLPGIRVSNNSPRINHLLFADDTSSARWIPLAAQIWPIFFLSMRLFQGNPVNHPMSNLYFLGSLP</sequence>
<reference key="1">
    <citation type="journal article" date="1997" name="Nat. Genet.">
        <title>The mitochondrial genome of Arabidopsis thaliana contains 57 genes in 366,924 nucleotides.</title>
        <authorList>
            <person name="Unseld M."/>
            <person name="Marienfeld J.R."/>
            <person name="Brandt P."/>
            <person name="Brennicke A."/>
        </authorList>
    </citation>
    <scope>NUCLEOTIDE SEQUENCE [LARGE SCALE GENOMIC DNA]</scope>
    <source>
        <strain>cv. C24</strain>
    </source>
</reference>
<reference key="2">
    <citation type="journal article" date="2018" name="Plant Cell">
        <title>Correction of persistent errors in Arabidopsis reference mitochondrial genomes.</title>
        <authorList>
            <person name="Sloan D.B."/>
            <person name="Wu Z."/>
            <person name="Sharbrough J."/>
        </authorList>
    </citation>
    <scope>NUCLEOTIDE SEQUENCE [LARGE SCALE GENOMIC DNA]</scope>
    <source>
        <strain>cv. Columbia</strain>
    </source>
</reference>
<reference key="3">
    <citation type="journal article" date="1999" name="Nature">
        <title>Sequence and analysis of chromosome 2 of the plant Arabidopsis thaliana.</title>
        <authorList>
            <person name="Lin X."/>
            <person name="Kaul S."/>
            <person name="Rounsley S.D."/>
            <person name="Shea T.P."/>
            <person name="Benito M.-I."/>
            <person name="Town C.D."/>
            <person name="Fujii C.Y."/>
            <person name="Mason T.M."/>
            <person name="Bowman C.L."/>
            <person name="Barnstead M.E."/>
            <person name="Feldblyum T.V."/>
            <person name="Buell C.R."/>
            <person name="Ketchum K.A."/>
            <person name="Lee J.J."/>
            <person name="Ronning C.M."/>
            <person name="Koo H.L."/>
            <person name="Moffat K.S."/>
            <person name="Cronin L.A."/>
            <person name="Shen M."/>
            <person name="Pai G."/>
            <person name="Van Aken S."/>
            <person name="Umayam L."/>
            <person name="Tallon L.J."/>
            <person name="Gill J.E."/>
            <person name="Adams M.D."/>
            <person name="Carrera A.J."/>
            <person name="Creasy T.H."/>
            <person name="Goodman H.M."/>
            <person name="Somerville C.R."/>
            <person name="Copenhaver G.P."/>
            <person name="Preuss D."/>
            <person name="Nierman W.C."/>
            <person name="White O."/>
            <person name="Eisen J.A."/>
            <person name="Salzberg S.L."/>
            <person name="Fraser C.M."/>
            <person name="Venter J.C."/>
        </authorList>
    </citation>
    <scope>NUCLEOTIDE SEQUENCE [LARGE SCALE GENOMIC DNA] (AT2G07697)</scope>
    <source>
        <strain>cv. Columbia</strain>
    </source>
</reference>
<reference key="4">
    <citation type="journal article" date="2017" name="Plant J.">
        <title>Araport11: a complete reannotation of the Arabidopsis thaliana reference genome.</title>
        <authorList>
            <person name="Cheng C.Y."/>
            <person name="Krishnakumar V."/>
            <person name="Chan A.P."/>
            <person name="Thibaud-Nissen F."/>
            <person name="Schobel S."/>
            <person name="Town C.D."/>
        </authorList>
    </citation>
    <scope>GENOME REANNOTATION</scope>
    <scope>SEQUENCE REVISION (AT2G07697)</scope>
    <source>
        <strain>cv. Columbia</strain>
    </source>
</reference>
<dbReference type="EMBL" id="Y08501">
    <property type="protein sequence ID" value="CAA69808.1"/>
    <property type="molecule type" value="Genomic_DNA"/>
</dbReference>
<dbReference type="EMBL" id="BK010421">
    <property type="status" value="NOT_ANNOTATED_CDS"/>
    <property type="molecule type" value="Genomic_DNA"/>
</dbReference>
<dbReference type="EMBL" id="AC007730">
    <property type="status" value="NOT_ANNOTATED_CDS"/>
    <property type="molecule type" value="Genomic_DNA"/>
</dbReference>
<dbReference type="EMBL" id="CP002685">
    <property type="status" value="NOT_ANNOTATED_CDS"/>
    <property type="molecule type" value="Genomic_DNA"/>
</dbReference>
<dbReference type="RefSeq" id="NP_085577.1">
    <property type="nucleotide sequence ID" value="NC_001284.2"/>
</dbReference>
<dbReference type="SMR" id="P92555"/>
<dbReference type="FunCoup" id="P92555">
    <property type="interactions" value="3"/>
</dbReference>
<dbReference type="STRING" id="3702.P92555"/>
<dbReference type="PaxDb" id="3702-ATMG01250.1"/>
<dbReference type="EnsemblPlants" id="ATMG01250.1">
    <property type="protein sequence ID" value="ATMG01250.1"/>
    <property type="gene ID" value="ATMG01250"/>
</dbReference>
<dbReference type="Gramene" id="ATMG01250.1">
    <property type="protein sequence ID" value="ATMG01250.1"/>
    <property type="gene ID" value="ATMG01250"/>
</dbReference>
<dbReference type="Araport" id="AT2G07697"/>
<dbReference type="Araport" id="ATMG01250"/>
<dbReference type="TAIR" id="AT2G07697"/>
<dbReference type="TAIR" id="ATMG01250">
    <property type="gene designation" value="ORF102"/>
</dbReference>
<dbReference type="eggNOG" id="KOG1075">
    <property type="taxonomic scope" value="Eukaryota"/>
</dbReference>
<dbReference type="HOGENOM" id="CLU_2029900_0_0_1"/>
<dbReference type="InParanoid" id="P92555"/>
<dbReference type="Proteomes" id="UP000006548">
    <property type="component" value="Chromosome 2"/>
</dbReference>
<dbReference type="Proteomes" id="UP000006548">
    <property type="component" value="Mitochondrion MT"/>
</dbReference>
<dbReference type="ExpressionAtlas" id="P92555">
    <property type="expression patterns" value="baseline and differential"/>
</dbReference>
<dbReference type="GO" id="GO:0005739">
    <property type="term" value="C:mitochondrion"/>
    <property type="evidence" value="ECO:0007669"/>
    <property type="project" value="UniProtKB-SubCell"/>
</dbReference>
<evidence type="ECO:0000305" key="1"/>
<evidence type="ECO:0000312" key="2">
    <source>
        <dbReference type="Araport" id="AT2G07697"/>
    </source>
</evidence>
<evidence type="ECO:0000312" key="3">
    <source>
        <dbReference type="Araport" id="ATMG01250"/>
    </source>
</evidence>